<protein>
    <recommendedName>
        <fullName>Succinate dehydrogenase membrane anchor subunit</fullName>
    </recommendedName>
    <alternativeName>
        <fullName>Succinate dehydrogenase, subunit IV</fullName>
    </alternativeName>
</protein>
<gene>
    <name type="primary">SDH4</name>
    <name type="synonym">SDHD</name>
</gene>
<name>DHSD_PORPU</name>
<keyword id="KW-0249">Electron transport</keyword>
<keyword id="KW-0349">Heme</keyword>
<keyword id="KW-0408">Iron</keyword>
<keyword id="KW-0472">Membrane</keyword>
<keyword id="KW-0479">Metal-binding</keyword>
<keyword id="KW-0496">Mitochondrion</keyword>
<keyword id="KW-0999">Mitochondrion inner membrane</keyword>
<keyword id="KW-0812">Transmembrane</keyword>
<keyword id="KW-1133">Transmembrane helix</keyword>
<keyword id="KW-0813">Transport</keyword>
<keyword id="KW-0816">Tricarboxylic acid cycle</keyword>
<proteinExistence type="inferred from homology"/>
<comment type="function">
    <text evidence="1">Membrane-anchoring subunit of succinate dehydrogenase (SDH).</text>
</comment>
<comment type="cofactor">
    <cofactor evidence="1">
        <name>heme</name>
        <dbReference type="ChEBI" id="CHEBI:30413"/>
    </cofactor>
    <text evidence="1">The heme is bound between the two transmembrane subunits.</text>
</comment>
<comment type="pathway">
    <text>Carbohydrate metabolism; tricarboxylic acid cycle.</text>
</comment>
<comment type="subunit">
    <text evidence="1">Part of an enzyme complex containing four subunits: a flavoprotein, an iron-sulfur protein, plus two membrane-anchoring proteins.</text>
</comment>
<comment type="subcellular location">
    <subcellularLocation>
        <location>Mitochondrion inner membrane</location>
        <topology>Multi-pass membrane protein</topology>
    </subcellularLocation>
</comment>
<organism>
    <name type="scientific">Porphyra purpurea</name>
    <name type="common">Red seaweed</name>
    <name type="synonym">Ulva purpurea</name>
    <dbReference type="NCBI Taxonomy" id="2787"/>
    <lineage>
        <taxon>Eukaryota</taxon>
        <taxon>Rhodophyta</taxon>
        <taxon>Bangiophyceae</taxon>
        <taxon>Bangiales</taxon>
        <taxon>Bangiaceae</taxon>
        <taxon>Porphyra</taxon>
    </lineage>
</organism>
<reference key="1">
    <citation type="journal article" date="1996" name="Proc. Natl. Acad. Sci. U.S.A.">
        <title>Genes encoding the same three subunits of respiratory complex II are present in the mitochondrial DNA of two phylogenetically distant eukaryotes.</title>
        <authorList>
            <person name="Burger G."/>
            <person name="Lang B.F."/>
            <person name="Reith M."/>
            <person name="Gray M.W."/>
        </authorList>
    </citation>
    <scope>NUCLEOTIDE SEQUENCE [GENOMIC DNA]</scope>
</reference>
<reference key="2">
    <citation type="submission" date="1998-12" db="EMBL/GenBank/DDBJ databases">
        <title>Complete sequence of the mitochondrial DNA of the red alga, Porphyra purpurea. Inverted repeats, sequence polymorphisms, and cyanobacterial introns.</title>
        <authorList>
            <person name="Burger G."/>
            <person name="Saint-Louis D."/>
            <person name="Gray M.W."/>
            <person name="Lang B.F."/>
        </authorList>
    </citation>
    <scope>NUCLEOTIDE SEQUENCE [GENOMIC DNA]</scope>
</reference>
<dbReference type="EMBL" id="AF114794">
    <property type="protein sequence ID" value="AAD03108.1"/>
    <property type="molecule type" value="Genomic_DNA"/>
</dbReference>
<dbReference type="PIR" id="T11229">
    <property type="entry name" value="T11229"/>
</dbReference>
<dbReference type="RefSeq" id="NP_049305.1">
    <property type="nucleotide sequence ID" value="NC_002007.1"/>
</dbReference>
<dbReference type="SMR" id="P80479"/>
<dbReference type="GeneID" id="809777"/>
<dbReference type="UniPathway" id="UPA00223"/>
<dbReference type="GO" id="GO:0005743">
    <property type="term" value="C:mitochondrial inner membrane"/>
    <property type="evidence" value="ECO:0007669"/>
    <property type="project" value="UniProtKB-SubCell"/>
</dbReference>
<dbReference type="GO" id="GO:0046872">
    <property type="term" value="F:metal ion binding"/>
    <property type="evidence" value="ECO:0007669"/>
    <property type="project" value="UniProtKB-KW"/>
</dbReference>
<dbReference type="GO" id="GO:0006099">
    <property type="term" value="P:tricarboxylic acid cycle"/>
    <property type="evidence" value="ECO:0007669"/>
    <property type="project" value="UniProtKB-UniPathway"/>
</dbReference>
<dbReference type="Gene3D" id="1.20.1300.10">
    <property type="entry name" value="Fumarate reductase/succinate dehydrogenase, transmembrane subunit"/>
    <property type="match status" value="1"/>
</dbReference>
<dbReference type="InterPro" id="IPR034804">
    <property type="entry name" value="SQR/QFR_C/D"/>
</dbReference>
<dbReference type="SUPFAM" id="SSF81343">
    <property type="entry name" value="Fumarate reductase respiratory complex transmembrane subunits"/>
    <property type="match status" value="1"/>
</dbReference>
<evidence type="ECO:0000250" key="1"/>
<evidence type="ECO:0000255" key="2"/>
<feature type="chain" id="PRO_0000158712" description="Succinate dehydrogenase membrane anchor subunit">
    <location>
        <begin position="1"/>
        <end position="95"/>
    </location>
</feature>
<feature type="topological domain" description="Mitochondrial matrix" evidence="2">
    <location>
        <begin position="1"/>
        <end position="19"/>
    </location>
</feature>
<feature type="transmembrane region" description="Helical" evidence="2">
    <location>
        <begin position="20"/>
        <end position="40"/>
    </location>
</feature>
<feature type="topological domain" description="Mitochondrial intermembrane" evidence="2">
    <location>
        <position position="41"/>
    </location>
</feature>
<feature type="transmembrane region" description="Helical" evidence="2">
    <location>
        <begin position="42"/>
        <end position="62"/>
    </location>
</feature>
<feature type="topological domain" description="Mitochondrial matrix" evidence="2">
    <location>
        <begin position="63"/>
        <end position="74"/>
    </location>
</feature>
<feature type="transmembrane region" description="Helical" evidence="2">
    <location>
        <begin position="75"/>
        <end position="95"/>
    </location>
</feature>
<feature type="binding site" description="axial binding residue" evidence="1">
    <location>
        <position position="53"/>
    </location>
    <ligand>
        <name>heme</name>
        <dbReference type="ChEBI" id="CHEBI:30413"/>
        <note>ligand shared with second transmembrane subunit</note>
    </ligand>
    <ligandPart>
        <name>Fe</name>
        <dbReference type="ChEBI" id="CHEBI:18248"/>
    </ligandPart>
</feature>
<feature type="binding site" evidence="1">
    <location>
        <position position="65"/>
    </location>
    <ligand>
        <name>a ubiquinone</name>
        <dbReference type="ChEBI" id="CHEBI:16389"/>
    </ligand>
</feature>
<sequence>MYKTLLAQVFFHSIAKKKLYFFWLPRLFSLLLVPGFLFDIEILFLFHPIILLHASLGLSVIIEDYIHIETIKFQYLSLIKLLLVLLINLNILYLL</sequence>
<geneLocation type="mitochondrion"/>
<accession>P80479</accession>